<accession>Q4ULR3</accession>
<evidence type="ECO:0000250" key="1"/>
<evidence type="ECO:0000305" key="2"/>
<protein>
    <recommendedName>
        <fullName>Probable branched-chain-amino-acid aminotransferase</fullName>
        <shortName>BCAT</shortName>
        <ecNumber>2.6.1.42</ecNumber>
    </recommendedName>
</protein>
<gene>
    <name type="primary">ilvE</name>
    <name type="ordered locus">RF_0659</name>
</gene>
<dbReference type="EC" id="2.6.1.42"/>
<dbReference type="EMBL" id="CP000053">
    <property type="protein sequence ID" value="AAY61510.1"/>
    <property type="molecule type" value="Genomic_DNA"/>
</dbReference>
<dbReference type="SMR" id="Q4ULR3"/>
<dbReference type="STRING" id="315456.RF_0659"/>
<dbReference type="KEGG" id="rfe:RF_0659"/>
<dbReference type="eggNOG" id="COG0115">
    <property type="taxonomic scope" value="Bacteria"/>
</dbReference>
<dbReference type="HOGENOM" id="CLU_020844_3_1_5"/>
<dbReference type="OrthoDB" id="21319at2"/>
<dbReference type="UniPathway" id="UPA00047">
    <property type="reaction ID" value="UER00058"/>
</dbReference>
<dbReference type="UniPathway" id="UPA00048">
    <property type="reaction ID" value="UER00073"/>
</dbReference>
<dbReference type="UniPathway" id="UPA00049">
    <property type="reaction ID" value="UER00062"/>
</dbReference>
<dbReference type="Proteomes" id="UP000008548">
    <property type="component" value="Chromosome"/>
</dbReference>
<dbReference type="GO" id="GO:0052656">
    <property type="term" value="F:L-isoleucine-2-oxoglutarate transaminase activity"/>
    <property type="evidence" value="ECO:0007669"/>
    <property type="project" value="RHEA"/>
</dbReference>
<dbReference type="GO" id="GO:0052654">
    <property type="term" value="F:L-leucine-2-oxoglutarate transaminase activity"/>
    <property type="evidence" value="ECO:0007669"/>
    <property type="project" value="RHEA"/>
</dbReference>
<dbReference type="GO" id="GO:0052655">
    <property type="term" value="F:L-valine-2-oxoglutarate transaminase activity"/>
    <property type="evidence" value="ECO:0007669"/>
    <property type="project" value="RHEA"/>
</dbReference>
<dbReference type="GO" id="GO:0009097">
    <property type="term" value="P:isoleucine biosynthetic process"/>
    <property type="evidence" value="ECO:0007669"/>
    <property type="project" value="UniProtKB-UniPathway"/>
</dbReference>
<dbReference type="GO" id="GO:0009098">
    <property type="term" value="P:L-leucine biosynthetic process"/>
    <property type="evidence" value="ECO:0007669"/>
    <property type="project" value="UniProtKB-UniPathway"/>
</dbReference>
<dbReference type="GO" id="GO:0009099">
    <property type="term" value="P:L-valine biosynthetic process"/>
    <property type="evidence" value="ECO:0007669"/>
    <property type="project" value="UniProtKB-UniPathway"/>
</dbReference>
<dbReference type="FunFam" id="3.20.10.10:FF:000002">
    <property type="entry name" value="D-alanine aminotransferase"/>
    <property type="match status" value="1"/>
</dbReference>
<dbReference type="Gene3D" id="3.30.470.10">
    <property type="match status" value="1"/>
</dbReference>
<dbReference type="Gene3D" id="3.20.10.10">
    <property type="entry name" value="D-amino Acid Aminotransferase, subunit A, domain 2"/>
    <property type="match status" value="1"/>
</dbReference>
<dbReference type="InterPro" id="IPR001544">
    <property type="entry name" value="Aminotrans_IV"/>
</dbReference>
<dbReference type="InterPro" id="IPR018300">
    <property type="entry name" value="Aminotrans_IV_CS"/>
</dbReference>
<dbReference type="InterPro" id="IPR036038">
    <property type="entry name" value="Aminotransferase-like"/>
</dbReference>
<dbReference type="InterPro" id="IPR005785">
    <property type="entry name" value="B_amino_transI"/>
</dbReference>
<dbReference type="InterPro" id="IPR043132">
    <property type="entry name" value="BCAT-like_C"/>
</dbReference>
<dbReference type="InterPro" id="IPR043131">
    <property type="entry name" value="BCAT-like_N"/>
</dbReference>
<dbReference type="InterPro" id="IPR050571">
    <property type="entry name" value="Class-IV_PLP-Dep_Aminotrnsfr"/>
</dbReference>
<dbReference type="NCBIfam" id="TIGR01122">
    <property type="entry name" value="ilvE_I"/>
    <property type="match status" value="1"/>
</dbReference>
<dbReference type="NCBIfam" id="NF005146">
    <property type="entry name" value="PRK06606.1"/>
    <property type="match status" value="1"/>
</dbReference>
<dbReference type="PANTHER" id="PTHR42743">
    <property type="entry name" value="AMINO-ACID AMINOTRANSFERASE"/>
    <property type="match status" value="1"/>
</dbReference>
<dbReference type="PANTHER" id="PTHR42743:SF11">
    <property type="entry name" value="AMINODEOXYCHORISMATE LYASE"/>
    <property type="match status" value="1"/>
</dbReference>
<dbReference type="Pfam" id="PF01063">
    <property type="entry name" value="Aminotran_4"/>
    <property type="match status" value="1"/>
</dbReference>
<dbReference type="SUPFAM" id="SSF56752">
    <property type="entry name" value="D-aminoacid aminotransferase-like PLP-dependent enzymes"/>
    <property type="match status" value="1"/>
</dbReference>
<dbReference type="PROSITE" id="PS00770">
    <property type="entry name" value="AA_TRANSFER_CLASS_4"/>
    <property type="match status" value="1"/>
</dbReference>
<sequence>MTMIKLEQIFWHVWINGDLVPYQFARIHVLTHSLHYSGSVFEGERAYNGKVFKLKEHTERLIKSAEALGLKVPYSVDEIIKAHELVIKQNNIKDAYIRPLIWCGDESLNITNPDLSTNLLIAGIPSMPRSFEKGINLHVGRWRKAIPDSTPVQSKSAAQYNMAITSKKEAKALGYDDALLLDYEGYIAECTTTNIFFVKDKTLYTPIADRFLNGITRQTIIEIAKDLGLEVKEERLKLEQIENFTGCFVTGTAIEVQNIDSIDLGNKKITFDDHQIADRLKKEYGRIVRE</sequence>
<reference key="1">
    <citation type="journal article" date="2005" name="PLoS Biol.">
        <title>The genome sequence of Rickettsia felis identifies the first putative conjugative plasmid in an obligate intracellular parasite.</title>
        <authorList>
            <person name="Ogata H."/>
            <person name="Renesto P."/>
            <person name="Audic S."/>
            <person name="Robert C."/>
            <person name="Blanc G."/>
            <person name="Fournier P.-E."/>
            <person name="Parinello H."/>
            <person name="Claverie J.-M."/>
            <person name="Raoult D."/>
        </authorList>
    </citation>
    <scope>NUCLEOTIDE SEQUENCE [LARGE SCALE GENOMIC DNA]</scope>
    <source>
        <strain>ATCC VR-1525 / URRWXCal2</strain>
    </source>
</reference>
<organism>
    <name type="scientific">Rickettsia felis (strain ATCC VR-1525 / URRWXCal2)</name>
    <name type="common">Rickettsia azadi</name>
    <dbReference type="NCBI Taxonomy" id="315456"/>
    <lineage>
        <taxon>Bacteria</taxon>
        <taxon>Pseudomonadati</taxon>
        <taxon>Pseudomonadota</taxon>
        <taxon>Alphaproteobacteria</taxon>
        <taxon>Rickettsiales</taxon>
        <taxon>Rickettsiaceae</taxon>
        <taxon>Rickettsieae</taxon>
        <taxon>Rickettsia</taxon>
        <taxon>spotted fever group</taxon>
    </lineage>
</organism>
<name>ILVE_RICFE</name>
<keyword id="KW-0028">Amino-acid biosynthesis</keyword>
<keyword id="KW-0032">Aminotransferase</keyword>
<keyword id="KW-0100">Branched-chain amino acid biosynthesis</keyword>
<keyword id="KW-0663">Pyridoxal phosphate</keyword>
<keyword id="KW-0808">Transferase</keyword>
<proteinExistence type="inferred from homology"/>
<comment type="function">
    <text evidence="1">Acts on leucine, isoleucine and valine.</text>
</comment>
<comment type="catalytic activity">
    <reaction>
        <text>L-leucine + 2-oxoglutarate = 4-methyl-2-oxopentanoate + L-glutamate</text>
        <dbReference type="Rhea" id="RHEA:18321"/>
        <dbReference type="ChEBI" id="CHEBI:16810"/>
        <dbReference type="ChEBI" id="CHEBI:17865"/>
        <dbReference type="ChEBI" id="CHEBI:29985"/>
        <dbReference type="ChEBI" id="CHEBI:57427"/>
        <dbReference type="EC" id="2.6.1.42"/>
    </reaction>
</comment>
<comment type="catalytic activity">
    <reaction>
        <text>L-isoleucine + 2-oxoglutarate = (S)-3-methyl-2-oxopentanoate + L-glutamate</text>
        <dbReference type="Rhea" id="RHEA:24801"/>
        <dbReference type="ChEBI" id="CHEBI:16810"/>
        <dbReference type="ChEBI" id="CHEBI:29985"/>
        <dbReference type="ChEBI" id="CHEBI:35146"/>
        <dbReference type="ChEBI" id="CHEBI:58045"/>
        <dbReference type="EC" id="2.6.1.42"/>
    </reaction>
</comment>
<comment type="catalytic activity">
    <reaction>
        <text>L-valine + 2-oxoglutarate = 3-methyl-2-oxobutanoate + L-glutamate</text>
        <dbReference type="Rhea" id="RHEA:24813"/>
        <dbReference type="ChEBI" id="CHEBI:11851"/>
        <dbReference type="ChEBI" id="CHEBI:16810"/>
        <dbReference type="ChEBI" id="CHEBI:29985"/>
        <dbReference type="ChEBI" id="CHEBI:57762"/>
        <dbReference type="EC" id="2.6.1.42"/>
    </reaction>
</comment>
<comment type="cofactor">
    <cofactor evidence="1">
        <name>pyridoxal 5'-phosphate</name>
        <dbReference type="ChEBI" id="CHEBI:597326"/>
    </cofactor>
</comment>
<comment type="pathway">
    <text>Amino-acid biosynthesis; L-isoleucine biosynthesis; L-isoleucine from 2-oxobutanoate: step 4/4.</text>
</comment>
<comment type="pathway">
    <text>Amino-acid biosynthesis; L-leucine biosynthesis; L-leucine from 3-methyl-2-oxobutanoate: step 4/4.</text>
</comment>
<comment type="pathway">
    <text>Amino-acid biosynthesis; L-valine biosynthesis; L-valine from pyruvate: step 4/4.</text>
</comment>
<comment type="similarity">
    <text evidence="2">Belongs to the class-IV pyridoxal-phosphate-dependent aminotransferase family.</text>
</comment>
<feature type="chain" id="PRO_0000280901" description="Probable branched-chain-amino-acid aminotransferase">
    <location>
        <begin position="1"/>
        <end position="290"/>
    </location>
</feature>
<feature type="modified residue" description="N6-(pyridoxal phosphate)lysine" evidence="1">
    <location>
        <position position="155"/>
    </location>
</feature>